<name>FLA1_SPIAU</name>
<sequence>MIINHNMSAINAQRVQGBVTGVTKNMV</sequence>
<reference key="1">
    <citation type="journal article" date="1991" name="J. Bacteriol.">
        <title>N-terminal amino acid sequences and amino acid compositions of the Spirochaeta aurantia flagellar filament polypeptides.</title>
        <authorList>
            <person name="Parales J. Jr."/>
            <person name="Greenberg E.P."/>
        </authorList>
    </citation>
    <scope>PROTEIN SEQUENCE</scope>
    <source>
        <strain>M1</strain>
    </source>
</reference>
<proteinExistence type="evidence at protein level"/>
<organism>
    <name type="scientific">Spirochaeta aurantia</name>
    <dbReference type="NCBI Taxonomy" id="147"/>
    <lineage>
        <taxon>Bacteria</taxon>
        <taxon>Pseudomonadati</taxon>
        <taxon>Spirochaetota</taxon>
        <taxon>Spirochaetia</taxon>
        <taxon>Spirochaetales</taxon>
        <taxon>Spirochaetaceae</taxon>
        <taxon>Spirochaeta</taxon>
    </lineage>
</organism>
<dbReference type="GO" id="GO:0055040">
    <property type="term" value="C:periplasmic flagellum"/>
    <property type="evidence" value="ECO:0007669"/>
    <property type="project" value="UniProtKB-SubCell"/>
</dbReference>
<evidence type="ECO:0000305" key="1"/>
<feature type="chain" id="PRO_0000182628" description="Flagellar filament 34 kDa core protein">
    <location>
        <begin position="1"/>
        <end position="27" status="greater than"/>
    </location>
</feature>
<feature type="non-terminal residue">
    <location>
        <position position="27"/>
    </location>
</feature>
<keyword id="KW-0975">Bacterial flagellum</keyword>
<keyword id="KW-0903">Direct protein sequencing</keyword>
<keyword id="KW-0574">Periplasm</keyword>
<comment type="function">
    <text>Component of the core of the flagella.</text>
</comment>
<comment type="subunit">
    <text>The flagellum consists of an outer layer composed of repeating units of FlaA around a core that contains one or all of five antigenically related polypeptides.</text>
</comment>
<comment type="subcellular location">
    <subcellularLocation>
        <location>Periplasmic flagellum</location>
    </subcellularLocation>
    <subcellularLocation>
        <location>Periplasm</location>
    </subcellularLocation>
</comment>
<comment type="similarity">
    <text evidence="1">Belongs to the bacterial flagellin family.</text>
</comment>
<accession>P21984</accession>
<protein>
    <recommendedName>
        <fullName>Flagellar filament 34 kDa core protein</fullName>
    </recommendedName>
    <alternativeName>
        <fullName>34 kDa major core flagellin</fullName>
    </alternativeName>
</protein>